<dbReference type="EMBL" id="Z21863">
    <property type="protein sequence ID" value="CAA79918.1"/>
    <property type="molecule type" value="Genomic_RNA"/>
</dbReference>
<dbReference type="PIR" id="B49598">
    <property type="entry name" value="B49598"/>
</dbReference>
<dbReference type="SMR" id="Q66125"/>
<dbReference type="ELM" id="Q66125"/>
<dbReference type="Proteomes" id="UP000008454">
    <property type="component" value="Genome"/>
</dbReference>
<dbReference type="GO" id="GO:0042025">
    <property type="term" value="C:host cell nucleus"/>
    <property type="evidence" value="ECO:0007669"/>
    <property type="project" value="UniProtKB-SubCell"/>
</dbReference>
<dbReference type="GO" id="GO:0052170">
    <property type="term" value="P:symbiont-mediated suppression of host innate immune response"/>
    <property type="evidence" value="ECO:0007669"/>
    <property type="project" value="UniProtKB-KW"/>
</dbReference>
<dbReference type="Gene3D" id="1.20.5.3800">
    <property type="match status" value="1"/>
</dbReference>
<dbReference type="InterPro" id="IPR004946">
    <property type="entry name" value="Cucumo_2B"/>
</dbReference>
<dbReference type="Pfam" id="PF03263">
    <property type="entry name" value="Cucumo_2B"/>
    <property type="match status" value="1"/>
</dbReference>
<proteinExistence type="evidence at protein level"/>
<organismHost>
    <name type="scientific">Cucumis sativus</name>
    <name type="common">Cucumber</name>
    <dbReference type="NCBI Taxonomy" id="3659"/>
</organismHost>
<organismHost>
    <name type="scientific">Nicotiana tabacum</name>
    <name type="common">Common tobacco</name>
    <dbReference type="NCBI Taxonomy" id="4097"/>
</organismHost>
<organismHost>
    <name type="scientific">Solanum lycopersicum</name>
    <name type="common">Tomato</name>
    <name type="synonym">Lycopersicon esculentum</name>
    <dbReference type="NCBI Taxonomy" id="4081"/>
</organismHost>
<organism>
    <name type="scientific">Cucumber mosaic virus (strain Q)</name>
    <name type="common">CMV</name>
    <dbReference type="NCBI Taxonomy" id="12310"/>
    <lineage>
        <taxon>Viruses</taxon>
        <taxon>Riboviria</taxon>
        <taxon>Orthornavirae</taxon>
        <taxon>Kitrinoviricota</taxon>
        <taxon>Alsuviricetes</taxon>
        <taxon>Martellivirales</taxon>
        <taxon>Bromoviridae</taxon>
        <taxon>Cucumovirus</taxon>
        <taxon>Cucumber mosaic virus</taxon>
    </lineage>
</organism>
<evidence type="ECO:0000250" key="1">
    <source>
        <dbReference type="UniProtKB" id="P0C783"/>
    </source>
</evidence>
<evidence type="ECO:0000269" key="2">
    <source>
    </source>
</evidence>
<evidence type="ECO:0000269" key="3">
    <source>
    </source>
</evidence>
<evidence type="ECO:0000269" key="4">
    <source>
    </source>
</evidence>
<evidence type="ECO:0000305" key="5"/>
<evidence type="ECO:0000305" key="6">
    <source>
    </source>
</evidence>
<accession>Q66125</accession>
<keyword id="KW-1048">Host nucleus</keyword>
<keyword id="KW-0945">Host-virus interaction</keyword>
<keyword id="KW-1090">Inhibition of host innate immune response by virus</keyword>
<keyword id="KW-0941">Suppressor of RNA silencing</keyword>
<keyword id="KW-0899">Viral immunoevasion</keyword>
<comment type="function">
    <text evidence="3 4">Multifunctional protein that plays two independent roles: viral suppressor of host RNAi (VSR) and viral inducer of host attractiveness to insect vectors (VIA). Acts as a suppressor of RNA-mediated gene silencing, also known as post-transcriptional gene silencing (PTGS), a mechanism of plant viral defense that limits the accumulation of viral RNAs (PubMed:11823432). May directly interfere with mobile silencing signaling (PubMed:11823432). Also inhibits signal transduction by the phytohormone jasmonate, making the infected plant more attractive to aphids, which are the second host to play a role as a dissemination vector (PubMed:28059067). Acts by binding to and inhibiting JAZ degradation in the host (PubMed:28059067).</text>
</comment>
<comment type="subunit">
    <text evidence="1 4">Homotetramer (Probable). Interacts with host AGO1; this interaction blocks AGO1 cleavage activity to attenuate RNA silencing and thus counter host defense (By similarity). Interacts with host JAZ.</text>
</comment>
<comment type="subcellular location">
    <subcellularLocation>
        <location evidence="2">Host nucleus</location>
    </subcellularLocation>
</comment>
<comment type="similarity">
    <text evidence="5">Belongs to the cucumovirus/ilarvirus protein 2b family.</text>
</comment>
<comment type="caution">
    <text evidence="6">A paper showing a role as suppressor of RNA-mediated gene silencing has been retracted because of duplications in figures 5B and 6I of this paper.</text>
</comment>
<comment type="online information" name="Protein Spotlight">
    <link uri="https://www.proteinspotlight.org/back_issues/266/"/>
    <text>Fierce - Issue 266 of February 2024</text>
</comment>
<sequence length="100" mass="11580">MDVLTVVVSTADLHLANLQEVKRRRRRSHVRNRRARGYKSPSERARSIARLFQMLPFHGVDPVDWFPDVVRSPSVTSLVSYESFDDTDWFAGNEWAEGSF</sequence>
<reference key="1">
    <citation type="journal article" date="1994" name="Virology">
        <title>New overlapping gene encoded by the cucumber mosaic virus genome.</title>
        <authorList>
            <person name="Ding S.W."/>
            <person name="Anderson B.J."/>
            <person name="Haase H.R."/>
            <person name="Symons R.H."/>
        </authorList>
    </citation>
    <scope>NUCLEOTIDE SEQUENCE [GENOMIC RNA]</scope>
</reference>
<reference key="2">
    <citation type="journal article" date="1998" name="EMBO J.">
        <title>Viral pathogenicity determinants are suppressors of transgene silencing in Nicotiana benthamiana.</title>
        <authorList>
            <person name="Brigneti G."/>
            <person name="Voinnet O."/>
            <person name="Li W.X."/>
            <person name="Ji L.H."/>
            <person name="Ding S.W."/>
            <person name="Baulcombe D.C."/>
        </authorList>
    </citation>
    <scope>RETRACTED PAPER</scope>
</reference>
<reference key="3">
    <citation type="journal article" date="2000" name="EMBO J.">
        <title>Suppression of post-transcriptional gene silencing by a plant viral protein localized in the nucleus.</title>
        <authorList>
            <person name="Lucy A.P."/>
            <person name="Guo H.S."/>
            <person name="Li W.X."/>
            <person name="Ding S.W."/>
        </authorList>
    </citation>
    <scope>SUBCELLULAR LOCATION</scope>
    <scope>MUTAGENESIS OF 23-ARG--ARG-25</scope>
</reference>
<reference key="4">
    <citation type="journal article" date="2002" name="EMBO J.">
        <title>A viral protein inhibits the long range signaling activity of the gene silencing signal.</title>
        <authorList>
            <person name="Guo H.S."/>
            <person name="Ding S.W."/>
        </authorList>
    </citation>
    <scope>FUNCTION</scope>
</reference>
<reference key="5">
    <citation type="journal article" date="2015" name="EMBO J.">
        <authorList>
            <person name="Brigneti G."/>
            <person name="Voinnet O."/>
            <person name="Li W.X."/>
            <person name="Ji L.H."/>
            <person name="Ding S.W."/>
            <person name="Baulcombe D.C."/>
        </authorList>
    </citation>
    <scope>RETRACTION NOTICE OF PUBMED:9822616</scope>
</reference>
<reference key="6">
    <citation type="journal article" date="2017" name="Cell Res.">
        <title>Viral effector protein manipulates host hormone signaling to attract insect vectors.</title>
        <authorList>
            <person name="Wu D."/>
            <person name="Qi T."/>
            <person name="Li W.X."/>
            <person name="Tian H."/>
            <person name="Gao H."/>
            <person name="Wang J."/>
            <person name="Ge J."/>
            <person name="Yao R."/>
            <person name="Ren C."/>
            <person name="Wang X.B."/>
            <person name="Liu Y."/>
            <person name="Kang L."/>
            <person name="Ding S.W."/>
            <person name="Xie D."/>
        </authorList>
    </citation>
    <scope>FUNCTION</scope>
    <scope>INTERACTION WITH HOST JAZ1</scope>
    <source>
        <strain>strain I</strain>
    </source>
</reference>
<name>2B_CMVQ</name>
<feature type="chain" id="PRO_0000083284" description="Suppressor of silencing 2b">
    <location>
        <begin position="1"/>
        <end position="100"/>
    </location>
</feature>
<feature type="short sequence motif" description="Nuclear localization signal">
    <location>
        <begin position="22"/>
        <end position="27"/>
    </location>
</feature>
<feature type="mutagenesis site" description="70% loss of nuclear localization." evidence="2">
    <original>RRR</original>
    <variation>QAQ</variation>
    <location>
        <begin position="23"/>
        <end position="25"/>
    </location>
</feature>
<protein>
    <recommendedName>
        <fullName>Suppressor of silencing 2b</fullName>
    </recommendedName>
    <alternativeName>
        <fullName>Protein 2b</fullName>
    </alternativeName>
</protein>
<gene>
    <name type="ORF">ORF2b</name>
</gene>